<name>RLMN_ACHLI</name>
<keyword id="KW-0004">4Fe-4S</keyword>
<keyword id="KW-0963">Cytoplasm</keyword>
<keyword id="KW-1015">Disulfide bond</keyword>
<keyword id="KW-0408">Iron</keyword>
<keyword id="KW-0411">Iron-sulfur</keyword>
<keyword id="KW-0479">Metal-binding</keyword>
<keyword id="KW-0489">Methyltransferase</keyword>
<keyword id="KW-1185">Reference proteome</keyword>
<keyword id="KW-0698">rRNA processing</keyword>
<keyword id="KW-0949">S-adenosyl-L-methionine</keyword>
<keyword id="KW-0808">Transferase</keyword>
<keyword id="KW-0819">tRNA processing</keyword>
<feature type="chain" id="PRO_0000349991" description="Probable dual-specificity RNA methyltransferase RlmN">
    <location>
        <begin position="1"/>
        <end position="338"/>
    </location>
</feature>
<feature type="domain" description="Radical SAM core" evidence="2">
    <location>
        <begin position="95"/>
        <end position="325"/>
    </location>
</feature>
<feature type="active site" description="Proton acceptor" evidence="1">
    <location>
        <position position="89"/>
    </location>
</feature>
<feature type="active site" description="S-methylcysteine intermediate" evidence="1">
    <location>
        <position position="330"/>
    </location>
</feature>
<feature type="binding site" evidence="1">
    <location>
        <position position="109"/>
    </location>
    <ligand>
        <name>[4Fe-4S] cluster</name>
        <dbReference type="ChEBI" id="CHEBI:49883"/>
        <note>4Fe-4S-S-AdoMet</note>
    </ligand>
</feature>
<feature type="binding site" evidence="1">
    <location>
        <position position="113"/>
    </location>
    <ligand>
        <name>[4Fe-4S] cluster</name>
        <dbReference type="ChEBI" id="CHEBI:49883"/>
        <note>4Fe-4S-S-AdoMet</note>
    </ligand>
</feature>
<feature type="binding site" evidence="1">
    <location>
        <position position="116"/>
    </location>
    <ligand>
        <name>[4Fe-4S] cluster</name>
        <dbReference type="ChEBI" id="CHEBI:49883"/>
        <note>4Fe-4S-S-AdoMet</note>
    </ligand>
</feature>
<feature type="binding site" evidence="1">
    <location>
        <begin position="156"/>
        <end position="157"/>
    </location>
    <ligand>
        <name>S-adenosyl-L-methionine</name>
        <dbReference type="ChEBI" id="CHEBI:59789"/>
    </ligand>
</feature>
<feature type="binding site" evidence="1">
    <location>
        <position position="188"/>
    </location>
    <ligand>
        <name>S-adenosyl-L-methionine</name>
        <dbReference type="ChEBI" id="CHEBI:59789"/>
    </ligand>
</feature>
<feature type="binding site" evidence="1">
    <location>
        <begin position="211"/>
        <end position="213"/>
    </location>
    <ligand>
        <name>S-adenosyl-L-methionine</name>
        <dbReference type="ChEBI" id="CHEBI:59789"/>
    </ligand>
</feature>
<feature type="binding site" evidence="1">
    <location>
        <position position="287"/>
    </location>
    <ligand>
        <name>S-adenosyl-L-methionine</name>
        <dbReference type="ChEBI" id="CHEBI:59789"/>
    </ligand>
</feature>
<feature type="disulfide bond" description="(transient)" evidence="1">
    <location>
        <begin position="102"/>
        <end position="330"/>
    </location>
</feature>
<reference key="1">
    <citation type="journal article" date="2011" name="J. Bacteriol.">
        <title>Complete genome and proteome of Acholeplasma laidlawii.</title>
        <authorList>
            <person name="Lazarev V.N."/>
            <person name="Levitskii S.A."/>
            <person name="Basovskii Y.I."/>
            <person name="Chukin M.M."/>
            <person name="Akopian T.A."/>
            <person name="Vereshchagin V.V."/>
            <person name="Kostrjukova E.S."/>
            <person name="Kovaleva G.Y."/>
            <person name="Kazanov M.D."/>
            <person name="Malko D.B."/>
            <person name="Vitreschak A.G."/>
            <person name="Sernova N.V."/>
            <person name="Gelfand M.S."/>
            <person name="Demina I.A."/>
            <person name="Serebryakova M.V."/>
            <person name="Galyamina M.A."/>
            <person name="Vtyurin N.N."/>
            <person name="Rogov S.I."/>
            <person name="Alexeev D.G."/>
            <person name="Ladygina V.G."/>
            <person name="Govorun V.M."/>
        </authorList>
    </citation>
    <scope>NUCLEOTIDE SEQUENCE [LARGE SCALE GENOMIC DNA]</scope>
    <source>
        <strain>PG-8A</strain>
    </source>
</reference>
<dbReference type="EC" id="2.1.1.192" evidence="1"/>
<dbReference type="EMBL" id="CP000896">
    <property type="protein sequence ID" value="ABX80877.1"/>
    <property type="molecule type" value="Genomic_DNA"/>
</dbReference>
<dbReference type="RefSeq" id="WP_012242208.1">
    <property type="nucleotide sequence ID" value="NC_010163.1"/>
</dbReference>
<dbReference type="SMR" id="A9NEU7"/>
<dbReference type="STRING" id="441768.ACL_0251"/>
<dbReference type="GeneID" id="41338440"/>
<dbReference type="KEGG" id="acl:ACL_0251"/>
<dbReference type="eggNOG" id="COG0820">
    <property type="taxonomic scope" value="Bacteria"/>
</dbReference>
<dbReference type="HOGENOM" id="CLU_029101_0_1_14"/>
<dbReference type="OrthoDB" id="9793973at2"/>
<dbReference type="Proteomes" id="UP000008558">
    <property type="component" value="Chromosome"/>
</dbReference>
<dbReference type="GO" id="GO:0005737">
    <property type="term" value="C:cytoplasm"/>
    <property type="evidence" value="ECO:0007669"/>
    <property type="project" value="UniProtKB-SubCell"/>
</dbReference>
<dbReference type="GO" id="GO:0051539">
    <property type="term" value="F:4 iron, 4 sulfur cluster binding"/>
    <property type="evidence" value="ECO:0007669"/>
    <property type="project" value="UniProtKB-UniRule"/>
</dbReference>
<dbReference type="GO" id="GO:0046872">
    <property type="term" value="F:metal ion binding"/>
    <property type="evidence" value="ECO:0007669"/>
    <property type="project" value="UniProtKB-KW"/>
</dbReference>
<dbReference type="GO" id="GO:0070040">
    <property type="term" value="F:rRNA (adenine(2503)-C2-)-methyltransferase activity"/>
    <property type="evidence" value="ECO:0007669"/>
    <property type="project" value="UniProtKB-UniRule"/>
</dbReference>
<dbReference type="GO" id="GO:0019843">
    <property type="term" value="F:rRNA binding"/>
    <property type="evidence" value="ECO:0007669"/>
    <property type="project" value="UniProtKB-UniRule"/>
</dbReference>
<dbReference type="GO" id="GO:0002935">
    <property type="term" value="F:tRNA (adenine(37)-C2)-methyltransferase activity"/>
    <property type="evidence" value="ECO:0007669"/>
    <property type="project" value="UniProtKB-UniRule"/>
</dbReference>
<dbReference type="GO" id="GO:0000049">
    <property type="term" value="F:tRNA binding"/>
    <property type="evidence" value="ECO:0007669"/>
    <property type="project" value="UniProtKB-UniRule"/>
</dbReference>
<dbReference type="GO" id="GO:0070475">
    <property type="term" value="P:rRNA base methylation"/>
    <property type="evidence" value="ECO:0007669"/>
    <property type="project" value="UniProtKB-UniRule"/>
</dbReference>
<dbReference type="GO" id="GO:0030488">
    <property type="term" value="P:tRNA methylation"/>
    <property type="evidence" value="ECO:0007669"/>
    <property type="project" value="UniProtKB-UniRule"/>
</dbReference>
<dbReference type="CDD" id="cd01335">
    <property type="entry name" value="Radical_SAM"/>
    <property type="match status" value="1"/>
</dbReference>
<dbReference type="FunFam" id="3.20.20.70:FF:000014">
    <property type="entry name" value="Probable dual-specificity RNA methyltransferase RlmN"/>
    <property type="match status" value="1"/>
</dbReference>
<dbReference type="Gene3D" id="1.10.150.530">
    <property type="match status" value="1"/>
</dbReference>
<dbReference type="Gene3D" id="3.20.20.70">
    <property type="entry name" value="Aldolase class I"/>
    <property type="match status" value="1"/>
</dbReference>
<dbReference type="HAMAP" id="MF_01849">
    <property type="entry name" value="RNA_methyltr_RlmN"/>
    <property type="match status" value="1"/>
</dbReference>
<dbReference type="InterPro" id="IPR013785">
    <property type="entry name" value="Aldolase_TIM"/>
</dbReference>
<dbReference type="InterPro" id="IPR006638">
    <property type="entry name" value="Elp3/MiaA/NifB-like_rSAM"/>
</dbReference>
<dbReference type="InterPro" id="IPR040072">
    <property type="entry name" value="Methyltransferase_A"/>
</dbReference>
<dbReference type="InterPro" id="IPR048641">
    <property type="entry name" value="RlmN_N"/>
</dbReference>
<dbReference type="InterPro" id="IPR027492">
    <property type="entry name" value="RNA_MTrfase_RlmN"/>
</dbReference>
<dbReference type="InterPro" id="IPR004383">
    <property type="entry name" value="rRNA_lsu_MTrfase_RlmN/Cfr"/>
</dbReference>
<dbReference type="InterPro" id="IPR007197">
    <property type="entry name" value="rSAM"/>
</dbReference>
<dbReference type="NCBIfam" id="TIGR00048">
    <property type="entry name" value="rRNA_mod_RlmN"/>
    <property type="match status" value="1"/>
</dbReference>
<dbReference type="PANTHER" id="PTHR30544">
    <property type="entry name" value="23S RRNA METHYLTRANSFERASE"/>
    <property type="match status" value="1"/>
</dbReference>
<dbReference type="PANTHER" id="PTHR30544:SF5">
    <property type="entry name" value="RADICAL SAM CORE DOMAIN-CONTAINING PROTEIN"/>
    <property type="match status" value="1"/>
</dbReference>
<dbReference type="Pfam" id="PF04055">
    <property type="entry name" value="Radical_SAM"/>
    <property type="match status" value="1"/>
</dbReference>
<dbReference type="Pfam" id="PF21016">
    <property type="entry name" value="RlmN_N"/>
    <property type="match status" value="1"/>
</dbReference>
<dbReference type="PIRSF" id="PIRSF006004">
    <property type="entry name" value="CHP00048"/>
    <property type="match status" value="1"/>
</dbReference>
<dbReference type="SFLD" id="SFLDF00275">
    <property type="entry name" value="adenosine_C2_methyltransferase"/>
    <property type="match status" value="1"/>
</dbReference>
<dbReference type="SFLD" id="SFLDS00029">
    <property type="entry name" value="Radical_SAM"/>
    <property type="match status" value="1"/>
</dbReference>
<dbReference type="SMART" id="SM00729">
    <property type="entry name" value="Elp3"/>
    <property type="match status" value="1"/>
</dbReference>
<dbReference type="SUPFAM" id="SSF102114">
    <property type="entry name" value="Radical SAM enzymes"/>
    <property type="match status" value="1"/>
</dbReference>
<dbReference type="PROSITE" id="PS51918">
    <property type="entry name" value="RADICAL_SAM"/>
    <property type="match status" value="1"/>
</dbReference>
<organism>
    <name type="scientific">Acholeplasma laidlawii (strain PG-8A)</name>
    <dbReference type="NCBI Taxonomy" id="441768"/>
    <lineage>
        <taxon>Bacteria</taxon>
        <taxon>Bacillati</taxon>
        <taxon>Mycoplasmatota</taxon>
        <taxon>Mollicutes</taxon>
        <taxon>Acholeplasmatales</taxon>
        <taxon>Acholeplasmataceae</taxon>
        <taxon>Acholeplasma</taxon>
    </lineage>
</organism>
<gene>
    <name evidence="1" type="primary">rlmN</name>
    <name type="ordered locus">ACL_0251</name>
</gene>
<accession>A9NEU7</accession>
<sequence length="338" mass="38282">MLIYDLTYEELEEFIVENGYKKFRADQIWNWLYKQKIEAFSEMNNIPEDIIKLLNDNYTFAGLETVIKNTSADGTIKFLFDLKDANLIETVLMSHNYGMSACVTTQVGCNIGCSFCASGVLKKKRDLTAGEIVAQIIRAEKESGVRVSSIVIMGIGEPFDNYKNFVKFISIVNHPKGLAIGARHITVSTSGLVPKIKEFAHLGIQVNLAVSLHAPNNEIRSKLMKINDRFKVEEVVDAIKYYIHVTNRRVTIEYIMIQDLNDSVETAVELAKLLKGMNVYVNLIPYNTVKEADYQRSSLENRLAFHKTLKEHKITAILRKEQGHDINAACGQLRSQNL</sequence>
<evidence type="ECO:0000255" key="1">
    <source>
        <dbReference type="HAMAP-Rule" id="MF_01849"/>
    </source>
</evidence>
<evidence type="ECO:0000255" key="2">
    <source>
        <dbReference type="PROSITE-ProRule" id="PRU01266"/>
    </source>
</evidence>
<comment type="function">
    <text evidence="1">Specifically methylates position 2 of adenine 2503 in 23S rRNA and position 2 of adenine 37 in tRNAs.</text>
</comment>
<comment type="catalytic activity">
    <reaction evidence="1">
        <text>adenosine(2503) in 23S rRNA + 2 reduced [2Fe-2S]-[ferredoxin] + 2 S-adenosyl-L-methionine = 2-methyladenosine(2503) in 23S rRNA + 5'-deoxyadenosine + L-methionine + 2 oxidized [2Fe-2S]-[ferredoxin] + S-adenosyl-L-homocysteine</text>
        <dbReference type="Rhea" id="RHEA:42916"/>
        <dbReference type="Rhea" id="RHEA-COMP:10000"/>
        <dbReference type="Rhea" id="RHEA-COMP:10001"/>
        <dbReference type="Rhea" id="RHEA-COMP:10152"/>
        <dbReference type="Rhea" id="RHEA-COMP:10282"/>
        <dbReference type="ChEBI" id="CHEBI:17319"/>
        <dbReference type="ChEBI" id="CHEBI:33737"/>
        <dbReference type="ChEBI" id="CHEBI:33738"/>
        <dbReference type="ChEBI" id="CHEBI:57844"/>
        <dbReference type="ChEBI" id="CHEBI:57856"/>
        <dbReference type="ChEBI" id="CHEBI:59789"/>
        <dbReference type="ChEBI" id="CHEBI:74411"/>
        <dbReference type="ChEBI" id="CHEBI:74497"/>
        <dbReference type="EC" id="2.1.1.192"/>
    </reaction>
</comment>
<comment type="catalytic activity">
    <reaction evidence="1">
        <text>adenosine(37) in tRNA + 2 reduced [2Fe-2S]-[ferredoxin] + 2 S-adenosyl-L-methionine = 2-methyladenosine(37) in tRNA + 5'-deoxyadenosine + L-methionine + 2 oxidized [2Fe-2S]-[ferredoxin] + S-adenosyl-L-homocysteine</text>
        <dbReference type="Rhea" id="RHEA:43332"/>
        <dbReference type="Rhea" id="RHEA-COMP:10000"/>
        <dbReference type="Rhea" id="RHEA-COMP:10001"/>
        <dbReference type="Rhea" id="RHEA-COMP:10162"/>
        <dbReference type="Rhea" id="RHEA-COMP:10485"/>
        <dbReference type="ChEBI" id="CHEBI:17319"/>
        <dbReference type="ChEBI" id="CHEBI:33737"/>
        <dbReference type="ChEBI" id="CHEBI:33738"/>
        <dbReference type="ChEBI" id="CHEBI:57844"/>
        <dbReference type="ChEBI" id="CHEBI:57856"/>
        <dbReference type="ChEBI" id="CHEBI:59789"/>
        <dbReference type="ChEBI" id="CHEBI:74411"/>
        <dbReference type="ChEBI" id="CHEBI:74497"/>
        <dbReference type="EC" id="2.1.1.192"/>
    </reaction>
</comment>
<comment type="cofactor">
    <cofactor evidence="1">
        <name>[4Fe-4S] cluster</name>
        <dbReference type="ChEBI" id="CHEBI:49883"/>
    </cofactor>
    <text evidence="1">Binds 1 [4Fe-4S] cluster. The cluster is coordinated with 3 cysteines and an exchangeable S-adenosyl-L-methionine.</text>
</comment>
<comment type="subcellular location">
    <subcellularLocation>
        <location evidence="1">Cytoplasm</location>
    </subcellularLocation>
</comment>
<comment type="miscellaneous">
    <text evidence="1">Reaction proceeds by a ping-pong mechanism involving intermediate methylation of a conserved cysteine residue.</text>
</comment>
<comment type="similarity">
    <text evidence="1">Belongs to the radical SAM superfamily. RlmN family.</text>
</comment>
<proteinExistence type="inferred from homology"/>
<protein>
    <recommendedName>
        <fullName evidence="1">Probable dual-specificity RNA methyltransferase RlmN</fullName>
        <ecNumber evidence="1">2.1.1.192</ecNumber>
    </recommendedName>
    <alternativeName>
        <fullName evidence="1">23S rRNA (adenine(2503)-C(2))-methyltransferase</fullName>
    </alternativeName>
    <alternativeName>
        <fullName evidence="1">23S rRNA m2A2503 methyltransferase</fullName>
    </alternativeName>
    <alternativeName>
        <fullName evidence="1">Ribosomal RNA large subunit methyltransferase N</fullName>
    </alternativeName>
    <alternativeName>
        <fullName evidence="1">tRNA (adenine(37)-C(2))-methyltransferase</fullName>
    </alternativeName>
    <alternativeName>
        <fullName evidence="1">tRNA m2A37 methyltransferase</fullName>
    </alternativeName>
</protein>